<sequence length="130" mass="14625">MSLMDPLANALNHISNCERVGKKVVYIKPASKLIGRVLKVMQDNGYIGEFEFIEDGRAGIFKVELIGKINKCGAIKPRFPVKKFGYEKFEKRYLPARDFGILIVSTTQGVMSHEEAKKRGLGGRLLAYVY</sequence>
<evidence type="ECO:0000250" key="1"/>
<evidence type="ECO:0000305" key="2"/>
<evidence type="ECO:0007829" key="3">
    <source>
        <dbReference type="PDB" id="1I6U"/>
    </source>
</evidence>
<reference key="1">
    <citation type="journal article" date="1996" name="Science">
        <title>Complete genome sequence of the methanogenic archaeon, Methanococcus jannaschii.</title>
        <authorList>
            <person name="Bult C.J."/>
            <person name="White O."/>
            <person name="Olsen G.J."/>
            <person name="Zhou L."/>
            <person name="Fleischmann R.D."/>
            <person name="Sutton G.G."/>
            <person name="Blake J.A."/>
            <person name="FitzGerald L.M."/>
            <person name="Clayton R.A."/>
            <person name="Gocayne J.D."/>
            <person name="Kerlavage A.R."/>
            <person name="Dougherty B.A."/>
            <person name="Tomb J.-F."/>
            <person name="Adams M.D."/>
            <person name="Reich C.I."/>
            <person name="Overbeek R."/>
            <person name="Kirkness E.F."/>
            <person name="Weinstock K.G."/>
            <person name="Merrick J.M."/>
            <person name="Glodek A."/>
            <person name="Scott J.L."/>
            <person name="Geoghagen N.S.M."/>
            <person name="Weidman J.F."/>
            <person name="Fuhrmann J.L."/>
            <person name="Nguyen D."/>
            <person name="Utterback T.R."/>
            <person name="Kelley J.M."/>
            <person name="Peterson J.D."/>
            <person name="Sadow P.W."/>
            <person name="Hanna M.C."/>
            <person name="Cotton M.D."/>
            <person name="Roberts K.M."/>
            <person name="Hurst M.A."/>
            <person name="Kaine B.P."/>
            <person name="Borodovsky M."/>
            <person name="Klenk H.-P."/>
            <person name="Fraser C.M."/>
            <person name="Smith H.O."/>
            <person name="Woese C.R."/>
            <person name="Venter J.C."/>
        </authorList>
    </citation>
    <scope>NUCLEOTIDE SEQUENCE [LARGE SCALE GENOMIC DNA]</scope>
    <source>
        <strain>ATCC 43067 / DSM 2661 / JAL-1 / JCM 10045 / NBRC 100440</strain>
    </source>
</reference>
<reference key="2">
    <citation type="journal article" date="2001" name="J. Mol. Biol.">
        <title>Detailed analysis of RNA-protein interactions within the ribosomal protein S8-rRNA complex from the archaeon Methanococcus jannaschii.</title>
        <authorList>
            <person name="Tishchenko S."/>
            <person name="Nikulin A."/>
            <person name="Fomenkova N."/>
            <person name="Nevskaya N."/>
            <person name="Nikonov O."/>
            <person name="Dumas P."/>
            <person name="Moine H."/>
            <person name="Ehresmann B."/>
            <person name="Ehresmann C."/>
            <person name="Piendl W."/>
            <person name="Lamzin V."/>
            <person name="Garber M.B."/>
            <person name="Nikonov S."/>
        </authorList>
    </citation>
    <scope>X-RAY CRYSTALLOGRAPHY (2.6 ANGSTROMS)</scope>
</reference>
<proteinExistence type="evidence at protein level"/>
<protein>
    <recommendedName>
        <fullName evidence="2">Small ribosomal subunit protein uS8</fullName>
    </recommendedName>
    <alternativeName>
        <fullName>30S ribosomal protein S8</fullName>
    </alternativeName>
</protein>
<name>RS8_METJA</name>
<keyword id="KW-0002">3D-structure</keyword>
<keyword id="KW-1185">Reference proteome</keyword>
<keyword id="KW-0687">Ribonucleoprotein</keyword>
<keyword id="KW-0689">Ribosomal protein</keyword>
<keyword id="KW-0694">RNA-binding</keyword>
<keyword id="KW-0699">rRNA-binding</keyword>
<accession>P54041</accession>
<organism>
    <name type="scientific">Methanocaldococcus jannaschii (strain ATCC 43067 / DSM 2661 / JAL-1 / JCM 10045 / NBRC 100440)</name>
    <name type="common">Methanococcus jannaschii</name>
    <dbReference type="NCBI Taxonomy" id="243232"/>
    <lineage>
        <taxon>Archaea</taxon>
        <taxon>Methanobacteriati</taxon>
        <taxon>Methanobacteriota</taxon>
        <taxon>Methanomada group</taxon>
        <taxon>Methanococci</taxon>
        <taxon>Methanococcales</taxon>
        <taxon>Methanocaldococcaceae</taxon>
        <taxon>Methanocaldococcus</taxon>
    </lineage>
</organism>
<feature type="chain" id="PRO_0000126540" description="Small ribosomal subunit protein uS8">
    <location>
        <begin position="1"/>
        <end position="130"/>
    </location>
</feature>
<feature type="helix" evidence="3">
    <location>
        <begin position="6"/>
        <end position="19"/>
    </location>
</feature>
<feature type="strand" evidence="3">
    <location>
        <begin position="23"/>
        <end position="29"/>
    </location>
</feature>
<feature type="helix" evidence="3">
    <location>
        <begin position="32"/>
        <end position="43"/>
    </location>
</feature>
<feature type="strand" evidence="3">
    <location>
        <begin position="50"/>
        <end position="53"/>
    </location>
</feature>
<feature type="strand" evidence="3">
    <location>
        <begin position="56"/>
        <end position="58"/>
    </location>
</feature>
<feature type="strand" evidence="3">
    <location>
        <begin position="60"/>
        <end position="64"/>
    </location>
</feature>
<feature type="strand" evidence="3">
    <location>
        <begin position="72"/>
        <end position="74"/>
    </location>
</feature>
<feature type="helix" evidence="3">
    <location>
        <begin position="87"/>
        <end position="93"/>
    </location>
</feature>
<feature type="strand" evidence="3">
    <location>
        <begin position="101"/>
        <end position="106"/>
    </location>
</feature>
<feature type="strand" evidence="3">
    <location>
        <begin position="109"/>
        <end position="112"/>
    </location>
</feature>
<feature type="helix" evidence="3">
    <location>
        <begin position="113"/>
        <end position="118"/>
    </location>
</feature>
<feature type="strand" evidence="3">
    <location>
        <begin position="123"/>
        <end position="129"/>
    </location>
</feature>
<comment type="function">
    <text evidence="1">One of the primary rRNA binding proteins, it binds directly to 16S rRNA central domain where it helps coordinate assembly of the platform of the 30S subunit.</text>
</comment>
<comment type="subunit">
    <text>Part of the 30S ribosomal subunit.</text>
</comment>
<comment type="similarity">
    <text evidence="2">Belongs to the universal ribosomal protein uS8 family.</text>
</comment>
<gene>
    <name type="primary">rps8</name>
    <name type="ordered locus">MJ0470</name>
</gene>
<dbReference type="EMBL" id="L77117">
    <property type="protein sequence ID" value="AAB98459.1"/>
    <property type="molecule type" value="Genomic_DNA"/>
</dbReference>
<dbReference type="PIR" id="F64358">
    <property type="entry name" value="F64358"/>
</dbReference>
<dbReference type="RefSeq" id="WP_010869971.1">
    <property type="nucleotide sequence ID" value="NC_000909.1"/>
</dbReference>
<dbReference type="PDB" id="1I6U">
    <property type="method" value="X-ray"/>
    <property type="resolution" value="2.60 A"/>
    <property type="chains" value="A/B=1-130"/>
</dbReference>
<dbReference type="PDBsum" id="1I6U"/>
<dbReference type="SMR" id="P54041"/>
<dbReference type="FunCoup" id="P54041">
    <property type="interactions" value="176"/>
</dbReference>
<dbReference type="STRING" id="243232.MJ_0470"/>
<dbReference type="PaxDb" id="243232-MJ_0470"/>
<dbReference type="EnsemblBacteria" id="AAB98459">
    <property type="protein sequence ID" value="AAB98459"/>
    <property type="gene ID" value="MJ_0470"/>
</dbReference>
<dbReference type="GeneID" id="8805616"/>
<dbReference type="KEGG" id="mja:MJ_0470"/>
<dbReference type="eggNOG" id="arCOG04091">
    <property type="taxonomic scope" value="Archaea"/>
</dbReference>
<dbReference type="HOGENOM" id="CLU_098428_1_1_2"/>
<dbReference type="InParanoid" id="P54041"/>
<dbReference type="OrthoDB" id="5670at2157"/>
<dbReference type="PhylomeDB" id="P54041"/>
<dbReference type="EvolutionaryTrace" id="P54041"/>
<dbReference type="Proteomes" id="UP000000805">
    <property type="component" value="Chromosome"/>
</dbReference>
<dbReference type="GO" id="GO:0022627">
    <property type="term" value="C:cytosolic small ribosomal subunit"/>
    <property type="evidence" value="ECO:0000318"/>
    <property type="project" value="GO_Central"/>
</dbReference>
<dbReference type="GO" id="GO:0019843">
    <property type="term" value="F:rRNA binding"/>
    <property type="evidence" value="ECO:0007669"/>
    <property type="project" value="UniProtKB-UniRule"/>
</dbReference>
<dbReference type="GO" id="GO:0003735">
    <property type="term" value="F:structural constituent of ribosome"/>
    <property type="evidence" value="ECO:0000318"/>
    <property type="project" value="GO_Central"/>
</dbReference>
<dbReference type="GO" id="GO:0006412">
    <property type="term" value="P:translation"/>
    <property type="evidence" value="ECO:0007669"/>
    <property type="project" value="UniProtKB-UniRule"/>
</dbReference>
<dbReference type="FunFam" id="3.30.1370.30:FF:000001">
    <property type="entry name" value="40S ribosomal protein S15a"/>
    <property type="match status" value="1"/>
</dbReference>
<dbReference type="FunFam" id="3.30.1490.10:FF:000002">
    <property type="entry name" value="40S ribosomal protein S15a"/>
    <property type="match status" value="1"/>
</dbReference>
<dbReference type="Gene3D" id="3.30.1370.30">
    <property type="match status" value="1"/>
</dbReference>
<dbReference type="Gene3D" id="3.30.1490.10">
    <property type="match status" value="1"/>
</dbReference>
<dbReference type="HAMAP" id="MF_01302_A">
    <property type="entry name" value="Ribosomal_uS8_A"/>
    <property type="match status" value="1"/>
</dbReference>
<dbReference type="InterPro" id="IPR000630">
    <property type="entry name" value="Ribosomal_uS8"/>
</dbReference>
<dbReference type="InterPro" id="IPR047863">
    <property type="entry name" value="Ribosomal_uS8_CS"/>
</dbReference>
<dbReference type="InterPro" id="IPR035987">
    <property type="entry name" value="Ribosomal_uS8_sf"/>
</dbReference>
<dbReference type="NCBIfam" id="NF003115">
    <property type="entry name" value="PRK04034.1"/>
    <property type="match status" value="1"/>
</dbReference>
<dbReference type="PANTHER" id="PTHR11758">
    <property type="entry name" value="40S RIBOSOMAL PROTEIN S15A"/>
    <property type="match status" value="1"/>
</dbReference>
<dbReference type="Pfam" id="PF00410">
    <property type="entry name" value="Ribosomal_S8"/>
    <property type="match status" value="1"/>
</dbReference>
<dbReference type="SUPFAM" id="SSF56047">
    <property type="entry name" value="Ribosomal protein S8"/>
    <property type="match status" value="1"/>
</dbReference>
<dbReference type="PROSITE" id="PS00053">
    <property type="entry name" value="RIBOSOMAL_S8"/>
    <property type="match status" value="1"/>
</dbReference>